<reference key="1">
    <citation type="journal article" date="2000" name="J. Mol. Biol.">
        <title>Selection of homeotic proteins for binding to a human DNA replication origin.</title>
        <authorList>
            <person name="de Stanchina E."/>
            <person name="Gabellini D."/>
            <person name="Norio P."/>
            <person name="Giacca M."/>
            <person name="Peverali F.A."/>
            <person name="Riva S."/>
            <person name="Falaschi A."/>
            <person name="Biamonti G."/>
        </authorList>
    </citation>
    <scope>NUCLEOTIDE SEQUENCE [MRNA]</scope>
</reference>
<reference key="2">
    <citation type="submission" date="2000-06" db="EMBL/GenBank/DDBJ databases">
        <title>A homeobox protein interacting with promoter region of p21WAF1/CIP1 gene is identical to HOX-C13 (HOX 3G).</title>
        <authorList>
            <person name="Li S."/>
            <person name="Zhang B."/>
            <person name="Li X."/>
        </authorList>
    </citation>
    <scope>NUCLEOTIDE SEQUENCE [MRNA]</scope>
</reference>
<reference key="3">
    <citation type="submission" date="2003-08" db="EMBL/GenBank/DDBJ databases">
        <title>Cloning of human full-length CDSs in BD Creator(TM) system donor vector.</title>
        <authorList>
            <person name="Kalnine N."/>
            <person name="Chen X."/>
            <person name="Rolfs A."/>
            <person name="Halleck A."/>
            <person name="Hines L."/>
            <person name="Eisenstein S."/>
            <person name="Koundinya M."/>
            <person name="Raphael J."/>
            <person name="Moreira D."/>
            <person name="Kelley T."/>
            <person name="LaBaer J."/>
            <person name="Lin Y."/>
            <person name="Phelan M."/>
            <person name="Farmer A."/>
        </authorList>
    </citation>
    <scope>NUCLEOTIDE SEQUENCE [LARGE SCALE MRNA]</scope>
</reference>
<reference key="4">
    <citation type="journal article" date="2004" name="Genome Res.">
        <title>The status, quality, and expansion of the NIH full-length cDNA project: the Mammalian Gene Collection (MGC).</title>
        <authorList>
            <consortium name="The MGC Project Team"/>
        </authorList>
    </citation>
    <scope>NUCLEOTIDE SEQUENCE [LARGE SCALE MRNA]</scope>
    <source>
        <tissue>Eye</tissue>
    </source>
</reference>
<reference key="5">
    <citation type="journal article" date="2004" name="Nat. Genet.">
        <title>Complete sequencing and characterization of 21,243 full-length human cDNAs.</title>
        <authorList>
            <person name="Ota T."/>
            <person name="Suzuki Y."/>
            <person name="Nishikawa T."/>
            <person name="Otsuki T."/>
            <person name="Sugiyama T."/>
            <person name="Irie R."/>
            <person name="Wakamatsu A."/>
            <person name="Hayashi K."/>
            <person name="Sato H."/>
            <person name="Nagai K."/>
            <person name="Kimura K."/>
            <person name="Makita H."/>
            <person name="Sekine M."/>
            <person name="Obayashi M."/>
            <person name="Nishi T."/>
            <person name="Shibahara T."/>
            <person name="Tanaka T."/>
            <person name="Ishii S."/>
            <person name="Yamamoto J."/>
            <person name="Saito K."/>
            <person name="Kawai Y."/>
            <person name="Isono Y."/>
            <person name="Nakamura Y."/>
            <person name="Nagahari K."/>
            <person name="Murakami K."/>
            <person name="Yasuda T."/>
            <person name="Iwayanagi T."/>
            <person name="Wagatsuma M."/>
            <person name="Shiratori A."/>
            <person name="Sudo H."/>
            <person name="Hosoiri T."/>
            <person name="Kaku Y."/>
            <person name="Kodaira H."/>
            <person name="Kondo H."/>
            <person name="Sugawara M."/>
            <person name="Takahashi M."/>
            <person name="Kanda K."/>
            <person name="Yokoi T."/>
            <person name="Furuya T."/>
            <person name="Kikkawa E."/>
            <person name="Omura Y."/>
            <person name="Abe K."/>
            <person name="Kamihara K."/>
            <person name="Katsuta N."/>
            <person name="Sato K."/>
            <person name="Tanikawa M."/>
            <person name="Yamazaki M."/>
            <person name="Ninomiya K."/>
            <person name="Ishibashi T."/>
            <person name="Yamashita H."/>
            <person name="Murakawa K."/>
            <person name="Fujimori K."/>
            <person name="Tanai H."/>
            <person name="Kimata M."/>
            <person name="Watanabe M."/>
            <person name="Hiraoka S."/>
            <person name="Chiba Y."/>
            <person name="Ishida S."/>
            <person name="Ono Y."/>
            <person name="Takiguchi S."/>
            <person name="Watanabe S."/>
            <person name="Yosida M."/>
            <person name="Hotuta T."/>
            <person name="Kusano J."/>
            <person name="Kanehori K."/>
            <person name="Takahashi-Fujii A."/>
            <person name="Hara H."/>
            <person name="Tanase T.-O."/>
            <person name="Nomura Y."/>
            <person name="Togiya S."/>
            <person name="Komai F."/>
            <person name="Hara R."/>
            <person name="Takeuchi K."/>
            <person name="Arita M."/>
            <person name="Imose N."/>
            <person name="Musashino K."/>
            <person name="Yuuki H."/>
            <person name="Oshima A."/>
            <person name="Sasaki N."/>
            <person name="Aotsuka S."/>
            <person name="Yoshikawa Y."/>
            <person name="Matsunawa H."/>
            <person name="Ichihara T."/>
            <person name="Shiohata N."/>
            <person name="Sano S."/>
            <person name="Moriya S."/>
            <person name="Momiyama H."/>
            <person name="Satoh N."/>
            <person name="Takami S."/>
            <person name="Terashima Y."/>
            <person name="Suzuki O."/>
            <person name="Nakagawa S."/>
            <person name="Senoh A."/>
            <person name="Mizoguchi H."/>
            <person name="Goto Y."/>
            <person name="Shimizu F."/>
            <person name="Wakebe H."/>
            <person name="Hishigaki H."/>
            <person name="Watanabe T."/>
            <person name="Sugiyama A."/>
            <person name="Takemoto M."/>
            <person name="Kawakami B."/>
            <person name="Yamazaki M."/>
            <person name="Watanabe K."/>
            <person name="Kumagai A."/>
            <person name="Itakura S."/>
            <person name="Fukuzumi Y."/>
            <person name="Fujimori Y."/>
            <person name="Komiyama M."/>
            <person name="Tashiro H."/>
            <person name="Tanigami A."/>
            <person name="Fujiwara T."/>
            <person name="Ono T."/>
            <person name="Yamada K."/>
            <person name="Fujii Y."/>
            <person name="Ozaki K."/>
            <person name="Hirao M."/>
            <person name="Ohmori Y."/>
            <person name="Kawabata A."/>
            <person name="Hikiji T."/>
            <person name="Kobatake N."/>
            <person name="Inagaki H."/>
            <person name="Ikema Y."/>
            <person name="Okamoto S."/>
            <person name="Okitani R."/>
            <person name="Kawakami T."/>
            <person name="Noguchi S."/>
            <person name="Itoh T."/>
            <person name="Shigeta K."/>
            <person name="Senba T."/>
            <person name="Matsumura K."/>
            <person name="Nakajima Y."/>
            <person name="Mizuno T."/>
            <person name="Morinaga M."/>
            <person name="Sasaki M."/>
            <person name="Togashi T."/>
            <person name="Oyama M."/>
            <person name="Hata H."/>
            <person name="Watanabe M."/>
            <person name="Komatsu T."/>
            <person name="Mizushima-Sugano J."/>
            <person name="Satoh T."/>
            <person name="Shirai Y."/>
            <person name="Takahashi Y."/>
            <person name="Nakagawa K."/>
            <person name="Okumura K."/>
            <person name="Nagase T."/>
            <person name="Nomura N."/>
            <person name="Kikuchi H."/>
            <person name="Masuho Y."/>
            <person name="Yamashita R."/>
            <person name="Nakai K."/>
            <person name="Yada T."/>
            <person name="Nakamura Y."/>
            <person name="Ohara O."/>
            <person name="Isogai T."/>
            <person name="Sugano S."/>
        </authorList>
    </citation>
    <scope>NUCLEOTIDE SEQUENCE [LARGE SCALE MRNA] OF 185-330</scope>
</reference>
<reference key="6">
    <citation type="journal article" date="1989" name="Nucleic Acids Res.">
        <title>The human HOX gene family.</title>
        <authorList>
            <person name="Acampora D."/>
            <person name="D'Esposito M."/>
            <person name="Faiella A."/>
            <person name="Pannese M."/>
            <person name="Migliaccio E."/>
            <person name="Morelli F."/>
            <person name="Stornaiuolo A."/>
            <person name="Nigro V."/>
            <person name="Simeone A."/>
            <person name="Boncinelli E."/>
        </authorList>
    </citation>
    <scope>NUCLEOTIDE SEQUENCE [MRNA] OF 260-325</scope>
</reference>
<reference key="7">
    <citation type="journal article" date="2012" name="Am. J. Hum. Genet.">
        <title>Loss-of-function mutations in HOXC13 cause pure hair and nail ectodermal dysplasia.</title>
        <authorList>
            <person name="Lin Z."/>
            <person name="Chen Q."/>
            <person name="Shi L."/>
            <person name="Lee M."/>
            <person name="Giehl K.A."/>
            <person name="Tang Z."/>
            <person name="Wang H."/>
            <person name="Zhang J."/>
            <person name="Yin J."/>
            <person name="Wu L."/>
            <person name="Xiao R."/>
            <person name="Liu X."/>
            <person name="Dai L."/>
            <person name="Zhu X."/>
            <person name="Li R."/>
            <person name="Betz R.C."/>
            <person name="Zhang X."/>
            <person name="Yang Y."/>
        </authorList>
    </citation>
    <scope>INVOLVEMENT IN ECTD9</scope>
</reference>
<reference key="8">
    <citation type="journal article" date="2017" name="Pediatr. Dermatol.">
        <title>A novel homozygous missense mutation in HOXC13 leads to autosomal recessive pure hair and nail ectodermal dysplasia.</title>
        <authorList>
            <person name="Li X."/>
            <person name="Orseth M.L."/>
            <person name="Smith J.M."/>
            <person name="Brehm M.A."/>
            <person name="Agim N.G."/>
            <person name="Glass D.A. II"/>
        </authorList>
    </citation>
    <scope>VARIANT ECTD9 ARG-271</scope>
</reference>
<accession>P31276</accession>
<accession>Q5BL02</accession>
<accession>Q96J32</accession>
<accession>Q9NR24</accession>
<accession>Q9NYD5</accession>
<protein>
    <recommendedName>
        <fullName>Homeobox protein Hox-C13</fullName>
    </recommendedName>
    <alternativeName>
        <fullName>Homeobox protein Hox-3G</fullName>
    </alternativeName>
</protein>
<dbReference type="EMBL" id="AF255676">
    <property type="protein sequence ID" value="AAF67760.1"/>
    <property type="molecule type" value="mRNA"/>
</dbReference>
<dbReference type="EMBL" id="AF263466">
    <property type="protein sequence ID" value="AAF73439.1"/>
    <property type="molecule type" value="mRNA"/>
</dbReference>
<dbReference type="EMBL" id="BT009908">
    <property type="protein sequence ID" value="AAP88910.1"/>
    <property type="molecule type" value="mRNA"/>
</dbReference>
<dbReference type="EMBL" id="BC090850">
    <property type="protein sequence ID" value="AAH90850.1"/>
    <property type="molecule type" value="mRNA"/>
</dbReference>
<dbReference type="EMBL" id="AK024027">
    <property type="protein sequence ID" value="BAB14786.1"/>
    <property type="molecule type" value="mRNA"/>
</dbReference>
<dbReference type="CCDS" id="CCDS8865.1"/>
<dbReference type="PIR" id="S14934">
    <property type="entry name" value="S14934"/>
</dbReference>
<dbReference type="RefSeq" id="NP_059106.2">
    <property type="nucleotide sequence ID" value="NM_017410.2"/>
</dbReference>
<dbReference type="SMR" id="P31276"/>
<dbReference type="BioGRID" id="109469">
    <property type="interactions" value="22"/>
</dbReference>
<dbReference type="FunCoup" id="P31276">
    <property type="interactions" value="598"/>
</dbReference>
<dbReference type="IntAct" id="P31276">
    <property type="interactions" value="24"/>
</dbReference>
<dbReference type="MINT" id="P31276"/>
<dbReference type="STRING" id="9606.ENSP00000243056"/>
<dbReference type="iPTMnet" id="P31276"/>
<dbReference type="PhosphoSitePlus" id="P31276"/>
<dbReference type="BioMuta" id="HOXC13"/>
<dbReference type="DMDM" id="20141539"/>
<dbReference type="jPOST" id="P31276"/>
<dbReference type="MassIVE" id="P31276"/>
<dbReference type="PaxDb" id="9606-ENSP00000243056"/>
<dbReference type="PeptideAtlas" id="P31276"/>
<dbReference type="ProteomicsDB" id="54776"/>
<dbReference type="Antibodypedia" id="27302">
    <property type="antibodies" value="113 antibodies from 26 providers"/>
</dbReference>
<dbReference type="DNASU" id="3229"/>
<dbReference type="Ensembl" id="ENST00000243056.5">
    <property type="protein sequence ID" value="ENSP00000243056.3"/>
    <property type="gene ID" value="ENSG00000123364.5"/>
</dbReference>
<dbReference type="GeneID" id="3229"/>
<dbReference type="KEGG" id="hsa:3229"/>
<dbReference type="MANE-Select" id="ENST00000243056.5">
    <property type="protein sequence ID" value="ENSP00000243056.3"/>
    <property type="RefSeq nucleotide sequence ID" value="NM_017410.3"/>
    <property type="RefSeq protein sequence ID" value="NP_059106.2"/>
</dbReference>
<dbReference type="UCSC" id="uc001sei.4">
    <property type="organism name" value="human"/>
</dbReference>
<dbReference type="AGR" id="HGNC:5125"/>
<dbReference type="CTD" id="3229"/>
<dbReference type="DisGeNET" id="3229"/>
<dbReference type="GeneCards" id="HOXC13"/>
<dbReference type="HGNC" id="HGNC:5125">
    <property type="gene designation" value="HOXC13"/>
</dbReference>
<dbReference type="HPA" id="ENSG00000123364">
    <property type="expression patterns" value="Tissue enriched (skin)"/>
</dbReference>
<dbReference type="MalaCards" id="HOXC13"/>
<dbReference type="MIM" id="142976">
    <property type="type" value="gene"/>
</dbReference>
<dbReference type="MIM" id="614931">
    <property type="type" value="phenotype"/>
</dbReference>
<dbReference type="neXtProt" id="NX_P31276"/>
<dbReference type="OpenTargets" id="ENSG00000123364"/>
<dbReference type="Orphanet" id="69084">
    <property type="disease" value="Pure hair and nail ectodermal dysplasia"/>
</dbReference>
<dbReference type="PharmGKB" id="PA29400"/>
<dbReference type="VEuPathDB" id="HostDB:ENSG00000123364"/>
<dbReference type="eggNOG" id="KOG0487">
    <property type="taxonomic scope" value="Eukaryota"/>
</dbReference>
<dbReference type="GeneTree" id="ENSGT00940000161087"/>
<dbReference type="HOGENOM" id="CLU_059940_0_0_1"/>
<dbReference type="InParanoid" id="P31276"/>
<dbReference type="OMA" id="SNCPATH"/>
<dbReference type="OrthoDB" id="6159439at2759"/>
<dbReference type="PAN-GO" id="P31276">
    <property type="GO annotations" value="3 GO annotations based on evolutionary models"/>
</dbReference>
<dbReference type="PhylomeDB" id="P31276"/>
<dbReference type="TreeFam" id="TF330813"/>
<dbReference type="PathwayCommons" id="P31276"/>
<dbReference type="SignaLink" id="P31276"/>
<dbReference type="SIGNOR" id="P31276"/>
<dbReference type="BioGRID-ORCS" id="3229">
    <property type="hits" value="28 hits in 1182 CRISPR screens"/>
</dbReference>
<dbReference type="ChiTaRS" id="HOXC13">
    <property type="organism name" value="human"/>
</dbReference>
<dbReference type="GeneWiki" id="HOXC13"/>
<dbReference type="GenomeRNAi" id="3229"/>
<dbReference type="Pharos" id="P31276">
    <property type="development level" value="Tbio"/>
</dbReference>
<dbReference type="PRO" id="PR:P31276"/>
<dbReference type="Proteomes" id="UP000005640">
    <property type="component" value="Chromosome 12"/>
</dbReference>
<dbReference type="RNAct" id="P31276">
    <property type="molecule type" value="protein"/>
</dbReference>
<dbReference type="Bgee" id="ENSG00000123364">
    <property type="expression patterns" value="Expressed in hair follicle and 31 other cell types or tissues"/>
</dbReference>
<dbReference type="GO" id="GO:0000785">
    <property type="term" value="C:chromatin"/>
    <property type="evidence" value="ECO:0000247"/>
    <property type="project" value="NTNU_SB"/>
</dbReference>
<dbReference type="GO" id="GO:0005634">
    <property type="term" value="C:nucleus"/>
    <property type="evidence" value="ECO:0007669"/>
    <property type="project" value="UniProtKB-SubCell"/>
</dbReference>
<dbReference type="GO" id="GO:0003682">
    <property type="term" value="F:chromatin binding"/>
    <property type="evidence" value="ECO:0007669"/>
    <property type="project" value="Ensembl"/>
</dbReference>
<dbReference type="GO" id="GO:0001228">
    <property type="term" value="F:DNA-binding transcription activator activity, RNA polymerase II-specific"/>
    <property type="evidence" value="ECO:0007669"/>
    <property type="project" value="Ensembl"/>
</dbReference>
<dbReference type="GO" id="GO:0003700">
    <property type="term" value="F:DNA-binding transcription factor activity"/>
    <property type="evidence" value="ECO:0000314"/>
    <property type="project" value="ARUK-UCL"/>
</dbReference>
<dbReference type="GO" id="GO:0000981">
    <property type="term" value="F:DNA-binding transcription factor activity, RNA polymerase II-specific"/>
    <property type="evidence" value="ECO:0000247"/>
    <property type="project" value="NTNU_SB"/>
</dbReference>
<dbReference type="GO" id="GO:0140297">
    <property type="term" value="F:DNA-binding transcription factor binding"/>
    <property type="evidence" value="ECO:0000353"/>
    <property type="project" value="ARUK-UCL"/>
</dbReference>
<dbReference type="GO" id="GO:0000978">
    <property type="term" value="F:RNA polymerase II cis-regulatory region sequence-specific DNA binding"/>
    <property type="evidence" value="ECO:0000318"/>
    <property type="project" value="GO_Central"/>
</dbReference>
<dbReference type="GO" id="GO:1990837">
    <property type="term" value="F:sequence-specific double-stranded DNA binding"/>
    <property type="evidence" value="ECO:0000314"/>
    <property type="project" value="ARUK-UCL"/>
</dbReference>
<dbReference type="GO" id="GO:0000976">
    <property type="term" value="F:transcription cis-regulatory region binding"/>
    <property type="evidence" value="ECO:0000315"/>
    <property type="project" value="ARUK-UCL"/>
</dbReference>
<dbReference type="GO" id="GO:0009653">
    <property type="term" value="P:anatomical structure morphogenesis"/>
    <property type="evidence" value="ECO:0000304"/>
    <property type="project" value="ProtInc"/>
</dbReference>
<dbReference type="GO" id="GO:0009952">
    <property type="term" value="P:anterior/posterior pattern specification"/>
    <property type="evidence" value="ECO:0007669"/>
    <property type="project" value="Ensembl"/>
</dbReference>
<dbReference type="GO" id="GO:0001942">
    <property type="term" value="P:hair follicle development"/>
    <property type="evidence" value="ECO:0007669"/>
    <property type="project" value="Ensembl"/>
</dbReference>
<dbReference type="GO" id="GO:0035878">
    <property type="term" value="P:nail development"/>
    <property type="evidence" value="ECO:0007669"/>
    <property type="project" value="Ensembl"/>
</dbReference>
<dbReference type="GO" id="GO:0045893">
    <property type="term" value="P:positive regulation of DNA-templated transcription"/>
    <property type="evidence" value="ECO:0000314"/>
    <property type="project" value="ARUK-UCL"/>
</dbReference>
<dbReference type="GO" id="GO:0006357">
    <property type="term" value="P:regulation of transcription by RNA polymerase II"/>
    <property type="evidence" value="ECO:0000318"/>
    <property type="project" value="GO_Central"/>
</dbReference>
<dbReference type="GO" id="GO:0043587">
    <property type="term" value="P:tongue morphogenesis"/>
    <property type="evidence" value="ECO:0007669"/>
    <property type="project" value="Ensembl"/>
</dbReference>
<dbReference type="CDD" id="cd00086">
    <property type="entry name" value="homeodomain"/>
    <property type="match status" value="1"/>
</dbReference>
<dbReference type="FunFam" id="1.10.10.60:FF:000130">
    <property type="entry name" value="Homeobox protein Hox-D12"/>
    <property type="match status" value="1"/>
</dbReference>
<dbReference type="Gene3D" id="1.10.10.60">
    <property type="entry name" value="Homeodomain-like"/>
    <property type="match status" value="1"/>
</dbReference>
<dbReference type="InterPro" id="IPR051003">
    <property type="entry name" value="AP_axis_regulatory_Homeobox"/>
</dbReference>
<dbReference type="InterPro" id="IPR001356">
    <property type="entry name" value="HD"/>
</dbReference>
<dbReference type="InterPro" id="IPR017970">
    <property type="entry name" value="Homeobox_CS"/>
</dbReference>
<dbReference type="InterPro" id="IPR009057">
    <property type="entry name" value="Homeodomain-like_sf"/>
</dbReference>
<dbReference type="InterPro" id="IPR022067">
    <property type="entry name" value="HoxA13_N"/>
</dbReference>
<dbReference type="PANTHER" id="PTHR45804:SF5">
    <property type="entry name" value="HOMEOBOX PROTEIN HOX-C13"/>
    <property type="match status" value="1"/>
</dbReference>
<dbReference type="PANTHER" id="PTHR45804">
    <property type="entry name" value="SEGMENTATION PROTEIN FUSHI TARAZU-LIKE PROTEIN"/>
    <property type="match status" value="1"/>
</dbReference>
<dbReference type="Pfam" id="PF00046">
    <property type="entry name" value="Homeodomain"/>
    <property type="match status" value="1"/>
</dbReference>
<dbReference type="Pfam" id="PF12284">
    <property type="entry name" value="HoxA13_N"/>
    <property type="match status" value="1"/>
</dbReference>
<dbReference type="SMART" id="SM00389">
    <property type="entry name" value="HOX"/>
    <property type="match status" value="1"/>
</dbReference>
<dbReference type="SUPFAM" id="SSF46689">
    <property type="entry name" value="Homeodomain-like"/>
    <property type="match status" value="1"/>
</dbReference>
<dbReference type="PROSITE" id="PS00027">
    <property type="entry name" value="HOMEOBOX_1"/>
    <property type="match status" value="1"/>
</dbReference>
<dbReference type="PROSITE" id="PS50071">
    <property type="entry name" value="HOMEOBOX_2"/>
    <property type="match status" value="1"/>
</dbReference>
<gene>
    <name type="primary">HOXC13</name>
    <name type="synonym">HOX3G</name>
</gene>
<sequence>MTTSLLLHPRWPESLMYVYEDSAAESGIGGGGGGGGGGTGGAGGGCSGASPGKAPSMDGLGSSCPASHCRDLLPHPVLGRPPAPLGAPQGAVYTDIPAPEAARQCAPPPAPPTSSSATLGYGYPFGGSYYGCRLSHNVNLQQKPCAYHPGDKYPEPSGALPGDDLSSRAKEFAFYPSFASSYQAMPGYLDVSVVPGISGHPEPRHDALIPVEGYQHWALSNGWDSQVYCSKEQSQSAHLWKSPFPDVVPLQPEVSSYRRGRKKRVPYTKVQLKELEKEYAASKFITKEKRRRISATTNLSERQVTIWFQNRRVKEKKVVSKSKAPHLHST</sequence>
<proteinExistence type="evidence at protein level"/>
<evidence type="ECO:0000250" key="1"/>
<evidence type="ECO:0000255" key="2">
    <source>
        <dbReference type="PROSITE-ProRule" id="PRU00108"/>
    </source>
</evidence>
<evidence type="ECO:0000256" key="3">
    <source>
        <dbReference type="SAM" id="MobiDB-lite"/>
    </source>
</evidence>
<evidence type="ECO:0000269" key="4">
    <source>
    </source>
</evidence>
<evidence type="ECO:0000269" key="5">
    <source>
    </source>
</evidence>
<evidence type="ECO:0000305" key="6"/>
<name>HXC13_HUMAN</name>
<comment type="function">
    <text evidence="1">Transcription factor which plays a role in hair follicle differentiation. Regulates FOXQ1 expression and that of other hair-specific genes (By similarity).</text>
</comment>
<comment type="interaction">
    <interactant intactId="EBI-2293590">
        <id>P31276</id>
    </interactant>
    <interactant intactId="EBI-765526">
        <id>P32519</id>
        <label>ELF1</label>
    </interactant>
    <organismsDiffer>false</organismsDiffer>
    <experiments>3</experiments>
</comment>
<comment type="interaction">
    <interactant intactId="EBI-2293590">
        <id>P31276</id>
    </interactant>
    <interactant intactId="EBI-6907210">
        <id>O95644</id>
        <label>NFATC1</label>
    </interactant>
    <organismsDiffer>false</organismsDiffer>
    <experiments>2</experiments>
</comment>
<comment type="subcellular location">
    <subcellularLocation>
        <location>Nucleus</location>
    </subcellularLocation>
</comment>
<comment type="disease" evidence="4 5">
    <disease id="DI-03620">
        <name>Ectodermal dysplasia 9, hair/nail type</name>
        <acronym>ECTD9</acronym>
        <description>A form of ectodermal dysplasia, a heterogeneous group of disorders due to abnormal development of two or more ectodermal structures such as hair, teeth, nails and sweat glands, with or without any additional clinical sign. Each combination of clinical features represents a different type of ectodermal dysplasia. ECTD9 is characterized by hypotrichosis and nail dystrophy without non-ectodermal or other ectodermal manifestations. Hypotrichosis usually occurs after birth with varying degrees of severity, ranging from mild hair loss to complete atrichia, including the loss of scalp hair, beard, eyebrows, eyelashes, axillary hair, and pubic hair. Nail dystrophy affects all 20 digits by causing short fragile nails or spoon nails (koilonychia).</description>
        <dbReference type="MIM" id="614931"/>
    </disease>
    <text>The disease is caused by variants affecting the gene represented in this entry.</text>
</comment>
<comment type="similarity">
    <text evidence="6">Belongs to the Abd-B homeobox family.</text>
</comment>
<comment type="online information" name="Atlas of Genetics and Cytogenetics in Oncology and Haematology">
    <link uri="https://atlasgeneticsoncology.org/gene/473/HOXC13"/>
</comment>
<organism>
    <name type="scientific">Homo sapiens</name>
    <name type="common">Human</name>
    <dbReference type="NCBI Taxonomy" id="9606"/>
    <lineage>
        <taxon>Eukaryota</taxon>
        <taxon>Metazoa</taxon>
        <taxon>Chordata</taxon>
        <taxon>Craniata</taxon>
        <taxon>Vertebrata</taxon>
        <taxon>Euteleostomi</taxon>
        <taxon>Mammalia</taxon>
        <taxon>Eutheria</taxon>
        <taxon>Euarchontoglires</taxon>
        <taxon>Primates</taxon>
        <taxon>Haplorrhini</taxon>
        <taxon>Catarrhini</taxon>
        <taxon>Hominidae</taxon>
        <taxon>Homo</taxon>
    </lineage>
</organism>
<feature type="chain" id="PRO_0000200197" description="Homeobox protein Hox-C13">
    <location>
        <begin position="1"/>
        <end position="330"/>
    </location>
</feature>
<feature type="DNA-binding region" description="Homeobox" evidence="2">
    <location>
        <begin position="260"/>
        <end position="319"/>
    </location>
</feature>
<feature type="region of interest" description="Disordered" evidence="3">
    <location>
        <begin position="30"/>
        <end position="50"/>
    </location>
</feature>
<feature type="compositionally biased region" description="Gly residues" evidence="3">
    <location>
        <begin position="30"/>
        <end position="47"/>
    </location>
</feature>
<feature type="sequence variant" id="VAR_012357" description="In dbSNP:rs1867298.">
    <original>S</original>
    <variation>I</variation>
    <location>
        <position position="50"/>
    </location>
</feature>
<feature type="sequence variant" id="VAR_079380" description="In ECTD9; uncertain significance; dbSNP:rs1383255506." evidence="5">
    <original>Q</original>
    <variation>R</variation>
    <location>
        <position position="271"/>
    </location>
</feature>
<feature type="sequence conflict" description="In Ref. 1; AAF67760." evidence="6" ref="1">
    <original>D</original>
    <variation>E</variation>
    <location>
        <position position="95"/>
    </location>
</feature>
<keyword id="KW-0217">Developmental protein</keyword>
<keyword id="KW-0225">Disease variant</keyword>
<keyword id="KW-0238">DNA-binding</keyword>
<keyword id="KW-0038">Ectodermal dysplasia</keyword>
<keyword id="KW-0371">Homeobox</keyword>
<keyword id="KW-0539">Nucleus</keyword>
<keyword id="KW-1267">Proteomics identification</keyword>
<keyword id="KW-1185">Reference proteome</keyword>
<keyword id="KW-0804">Transcription</keyword>
<keyword id="KW-0805">Transcription regulation</keyword>